<keyword id="KW-0067">ATP-binding</keyword>
<keyword id="KW-0378">Hydrolase</keyword>
<keyword id="KW-0547">Nucleotide-binding</keyword>
<keyword id="KW-0576">Peroxisome</keyword>
<keyword id="KW-0645">Protease</keyword>
<keyword id="KW-1185">Reference proteome</keyword>
<keyword id="KW-0720">Serine protease</keyword>
<gene>
    <name type="primary">LON2</name>
    <name type="ordered locus">At5g47040</name>
    <name type="ORF">MQD22.18</name>
</gene>
<dbReference type="EC" id="3.4.21.53" evidence="1"/>
<dbReference type="EMBL" id="AF033862">
    <property type="protein sequence ID" value="AAC05085.1"/>
    <property type="molecule type" value="Genomic_DNA"/>
</dbReference>
<dbReference type="EMBL" id="AB013394">
    <property type="protein sequence ID" value="BAB10243.1"/>
    <property type="molecule type" value="Genomic_DNA"/>
</dbReference>
<dbReference type="EMBL" id="CP002688">
    <property type="protein sequence ID" value="AED95460.1"/>
    <property type="molecule type" value="Genomic_DNA"/>
</dbReference>
<dbReference type="EMBL" id="BT002374">
    <property type="protein sequence ID" value="AAO00734.1"/>
    <property type="status" value="ALT_INIT"/>
    <property type="molecule type" value="mRNA"/>
</dbReference>
<dbReference type="EMBL" id="BT010392">
    <property type="protein sequence ID" value="AAQ56835.1"/>
    <property type="molecule type" value="mRNA"/>
</dbReference>
<dbReference type="RefSeq" id="NP_568675.1">
    <property type="nucleotide sequence ID" value="NM_124075.4"/>
</dbReference>
<dbReference type="SMR" id="O64948"/>
<dbReference type="BioGRID" id="19998">
    <property type="interactions" value="1"/>
</dbReference>
<dbReference type="FunCoup" id="O64948">
    <property type="interactions" value="1490"/>
</dbReference>
<dbReference type="STRING" id="3702.O64948"/>
<dbReference type="MEROPS" id="S16.003"/>
<dbReference type="iPTMnet" id="O64948"/>
<dbReference type="PaxDb" id="3702-AT5G47040.1"/>
<dbReference type="ProteomicsDB" id="238521"/>
<dbReference type="EnsemblPlants" id="AT5G47040.1">
    <property type="protein sequence ID" value="AT5G47040.1"/>
    <property type="gene ID" value="AT5G47040"/>
</dbReference>
<dbReference type="GeneID" id="834750"/>
<dbReference type="Gramene" id="AT5G47040.1">
    <property type="protein sequence ID" value="AT5G47040.1"/>
    <property type="gene ID" value="AT5G47040"/>
</dbReference>
<dbReference type="KEGG" id="ath:AT5G47040"/>
<dbReference type="Araport" id="AT5G47040"/>
<dbReference type="TAIR" id="AT5G47040">
    <property type="gene designation" value="LON2"/>
</dbReference>
<dbReference type="eggNOG" id="KOG2004">
    <property type="taxonomic scope" value="Eukaryota"/>
</dbReference>
<dbReference type="HOGENOM" id="CLU_004109_4_0_1"/>
<dbReference type="InParanoid" id="O64948"/>
<dbReference type="OMA" id="EYFLHQQ"/>
<dbReference type="OrthoDB" id="2411602at2759"/>
<dbReference type="PhylomeDB" id="O64948"/>
<dbReference type="BRENDA" id="3.4.21.53">
    <property type="organism ID" value="399"/>
</dbReference>
<dbReference type="BRENDA" id="3.6.4.7">
    <property type="organism ID" value="399"/>
</dbReference>
<dbReference type="PRO" id="PR:O64948"/>
<dbReference type="Proteomes" id="UP000006548">
    <property type="component" value="Chromosome 5"/>
</dbReference>
<dbReference type="ExpressionAtlas" id="O64948">
    <property type="expression patterns" value="baseline and differential"/>
</dbReference>
<dbReference type="GO" id="GO:0070013">
    <property type="term" value="C:intracellular organelle lumen"/>
    <property type="evidence" value="ECO:0000314"/>
    <property type="project" value="TAIR"/>
</dbReference>
<dbReference type="GO" id="GO:0005782">
    <property type="term" value="C:peroxisomal matrix"/>
    <property type="evidence" value="ECO:0007669"/>
    <property type="project" value="UniProtKB-SubCell"/>
</dbReference>
<dbReference type="GO" id="GO:0005777">
    <property type="term" value="C:peroxisome"/>
    <property type="evidence" value="ECO:0000314"/>
    <property type="project" value="TAIR"/>
</dbReference>
<dbReference type="GO" id="GO:0005524">
    <property type="term" value="F:ATP binding"/>
    <property type="evidence" value="ECO:0007669"/>
    <property type="project" value="UniProtKB-UniRule"/>
</dbReference>
<dbReference type="GO" id="GO:0016887">
    <property type="term" value="F:ATP hydrolysis activity"/>
    <property type="evidence" value="ECO:0007669"/>
    <property type="project" value="UniProtKB-UniRule"/>
</dbReference>
<dbReference type="GO" id="GO:0004176">
    <property type="term" value="F:ATP-dependent peptidase activity"/>
    <property type="evidence" value="ECO:0007669"/>
    <property type="project" value="UniProtKB-UniRule"/>
</dbReference>
<dbReference type="GO" id="GO:0004252">
    <property type="term" value="F:serine-type endopeptidase activity"/>
    <property type="evidence" value="ECO:0007669"/>
    <property type="project" value="UniProtKB-UniRule"/>
</dbReference>
<dbReference type="GO" id="GO:0048527">
    <property type="term" value="P:lateral root development"/>
    <property type="evidence" value="ECO:0000315"/>
    <property type="project" value="TAIR"/>
</dbReference>
<dbReference type="GO" id="GO:0016560">
    <property type="term" value="P:protein import into peroxisome matrix, docking"/>
    <property type="evidence" value="ECO:0000314"/>
    <property type="project" value="TAIR"/>
</dbReference>
<dbReference type="GO" id="GO:0016485">
    <property type="term" value="P:protein processing"/>
    <property type="evidence" value="ECO:0007669"/>
    <property type="project" value="UniProtKB-UniRule"/>
</dbReference>
<dbReference type="GO" id="GO:0006515">
    <property type="term" value="P:protein quality control for misfolded or incompletely synthesized proteins"/>
    <property type="evidence" value="ECO:0007669"/>
    <property type="project" value="UniProtKB-UniRule"/>
</dbReference>
<dbReference type="CDD" id="cd19500">
    <property type="entry name" value="RecA-like_Lon"/>
    <property type="match status" value="1"/>
</dbReference>
<dbReference type="FunFam" id="1.20.5.5270:FF:000002">
    <property type="entry name" value="Lon protease homolog"/>
    <property type="match status" value="1"/>
</dbReference>
<dbReference type="FunFam" id="1.10.8.60:FF:000095">
    <property type="entry name" value="Lon protease homolog 2, peroxisomal"/>
    <property type="match status" value="1"/>
</dbReference>
<dbReference type="FunFam" id="1.20.58.1480:FF:000005">
    <property type="entry name" value="Lon protease homolog 2, peroxisomal"/>
    <property type="match status" value="1"/>
</dbReference>
<dbReference type="FunFam" id="3.30.230.10:FF:000019">
    <property type="entry name" value="Lon protease homolog 2, peroxisomal"/>
    <property type="match status" value="1"/>
</dbReference>
<dbReference type="FunFam" id="3.40.50.300:FF:000651">
    <property type="entry name" value="Lon protease homolog 2, peroxisomal"/>
    <property type="match status" value="1"/>
</dbReference>
<dbReference type="Gene3D" id="1.10.8.60">
    <property type="match status" value="1"/>
</dbReference>
<dbReference type="Gene3D" id="1.20.5.5270">
    <property type="match status" value="1"/>
</dbReference>
<dbReference type="Gene3D" id="1.20.58.1480">
    <property type="match status" value="1"/>
</dbReference>
<dbReference type="Gene3D" id="3.30.230.10">
    <property type="match status" value="1"/>
</dbReference>
<dbReference type="Gene3D" id="2.30.130.40">
    <property type="entry name" value="LON domain-like"/>
    <property type="match status" value="1"/>
</dbReference>
<dbReference type="Gene3D" id="3.40.50.300">
    <property type="entry name" value="P-loop containing nucleotide triphosphate hydrolases"/>
    <property type="match status" value="1"/>
</dbReference>
<dbReference type="HAMAP" id="MF_03121">
    <property type="entry name" value="lonp2_euk"/>
    <property type="match status" value="1"/>
</dbReference>
<dbReference type="InterPro" id="IPR003593">
    <property type="entry name" value="AAA+_ATPase"/>
</dbReference>
<dbReference type="InterPro" id="IPR003959">
    <property type="entry name" value="ATPase_AAA_core"/>
</dbReference>
<dbReference type="InterPro" id="IPR004815">
    <property type="entry name" value="Lon_bac/euk-typ"/>
</dbReference>
<dbReference type="InterPro" id="IPR054594">
    <property type="entry name" value="Lon_lid"/>
</dbReference>
<dbReference type="InterPro" id="IPR008269">
    <property type="entry name" value="Lon_proteolytic"/>
</dbReference>
<dbReference type="InterPro" id="IPR027065">
    <property type="entry name" value="Lon_Prtase"/>
</dbReference>
<dbReference type="InterPro" id="IPR003111">
    <property type="entry name" value="Lon_prtase_N"/>
</dbReference>
<dbReference type="InterPro" id="IPR046336">
    <property type="entry name" value="Lon_prtase_N_sf"/>
</dbReference>
<dbReference type="InterPro" id="IPR027501">
    <property type="entry name" value="Lonp2_euk"/>
</dbReference>
<dbReference type="InterPro" id="IPR027417">
    <property type="entry name" value="P-loop_NTPase"/>
</dbReference>
<dbReference type="InterPro" id="IPR008268">
    <property type="entry name" value="Peptidase_S16_AS"/>
</dbReference>
<dbReference type="InterPro" id="IPR015947">
    <property type="entry name" value="PUA-like_sf"/>
</dbReference>
<dbReference type="InterPro" id="IPR020568">
    <property type="entry name" value="Ribosomal_Su5_D2-typ_SF"/>
</dbReference>
<dbReference type="InterPro" id="IPR014721">
    <property type="entry name" value="Ribsml_uS5_D2-typ_fold_subgr"/>
</dbReference>
<dbReference type="NCBIfam" id="TIGR00763">
    <property type="entry name" value="lon"/>
    <property type="match status" value="1"/>
</dbReference>
<dbReference type="PANTHER" id="PTHR10046">
    <property type="entry name" value="ATP DEPENDENT LON PROTEASE FAMILY MEMBER"/>
    <property type="match status" value="1"/>
</dbReference>
<dbReference type="Pfam" id="PF00004">
    <property type="entry name" value="AAA"/>
    <property type="match status" value="1"/>
</dbReference>
<dbReference type="Pfam" id="PF05362">
    <property type="entry name" value="Lon_C"/>
    <property type="match status" value="1"/>
</dbReference>
<dbReference type="Pfam" id="PF22667">
    <property type="entry name" value="Lon_lid"/>
    <property type="match status" value="1"/>
</dbReference>
<dbReference type="Pfam" id="PF02190">
    <property type="entry name" value="LON_substr_bdg"/>
    <property type="match status" value="1"/>
</dbReference>
<dbReference type="PIRSF" id="PIRSF001174">
    <property type="entry name" value="Lon_proteas"/>
    <property type="match status" value="1"/>
</dbReference>
<dbReference type="PRINTS" id="PR00830">
    <property type="entry name" value="ENDOLAPTASE"/>
</dbReference>
<dbReference type="SMART" id="SM00382">
    <property type="entry name" value="AAA"/>
    <property type="match status" value="1"/>
</dbReference>
<dbReference type="SMART" id="SM00464">
    <property type="entry name" value="LON"/>
    <property type="match status" value="1"/>
</dbReference>
<dbReference type="SUPFAM" id="SSF52540">
    <property type="entry name" value="P-loop containing nucleoside triphosphate hydrolases"/>
    <property type="match status" value="1"/>
</dbReference>
<dbReference type="SUPFAM" id="SSF88697">
    <property type="entry name" value="PUA domain-like"/>
    <property type="match status" value="1"/>
</dbReference>
<dbReference type="SUPFAM" id="SSF54211">
    <property type="entry name" value="Ribosomal protein S5 domain 2-like"/>
    <property type="match status" value="1"/>
</dbReference>
<dbReference type="PROSITE" id="PS51787">
    <property type="entry name" value="LON_N"/>
    <property type="match status" value="1"/>
</dbReference>
<dbReference type="PROSITE" id="PS51786">
    <property type="entry name" value="LON_PROTEOLYTIC"/>
    <property type="match status" value="1"/>
</dbReference>
<dbReference type="PROSITE" id="PS01046">
    <property type="entry name" value="LON_SER"/>
    <property type="match status" value="1"/>
</dbReference>
<name>LONP2_ARATH</name>
<organism>
    <name type="scientific">Arabidopsis thaliana</name>
    <name type="common">Mouse-ear cress</name>
    <dbReference type="NCBI Taxonomy" id="3702"/>
    <lineage>
        <taxon>Eukaryota</taxon>
        <taxon>Viridiplantae</taxon>
        <taxon>Streptophyta</taxon>
        <taxon>Embryophyta</taxon>
        <taxon>Tracheophyta</taxon>
        <taxon>Spermatophyta</taxon>
        <taxon>Magnoliopsida</taxon>
        <taxon>eudicotyledons</taxon>
        <taxon>Gunneridae</taxon>
        <taxon>Pentapetalae</taxon>
        <taxon>rosids</taxon>
        <taxon>malvids</taxon>
        <taxon>Brassicales</taxon>
        <taxon>Brassicaceae</taxon>
        <taxon>Camelineae</taxon>
        <taxon>Arabidopsis</taxon>
    </lineage>
</organism>
<proteinExistence type="evidence at transcript level"/>
<feature type="chain" id="PRO_0000026736" description="Lon protease homolog 2, peroxisomal">
    <location>
        <begin position="1"/>
        <end position="888"/>
    </location>
</feature>
<feature type="domain" description="Lon N-terminal" evidence="3">
    <location>
        <begin position="11"/>
        <end position="255"/>
    </location>
</feature>
<feature type="domain" description="Lon proteolytic" evidence="2">
    <location>
        <begin position="692"/>
        <end position="877"/>
    </location>
</feature>
<feature type="short sequence motif" description="Microbody targeting signal" evidence="1">
    <location>
        <begin position="886"/>
        <end position="888"/>
    </location>
</feature>
<feature type="active site" evidence="1">
    <location>
        <position position="783"/>
    </location>
</feature>
<feature type="active site" evidence="1">
    <location>
        <position position="826"/>
    </location>
</feature>
<feature type="binding site" evidence="1">
    <location>
        <begin position="408"/>
        <end position="415"/>
    </location>
    <ligand>
        <name>ATP</name>
        <dbReference type="ChEBI" id="CHEBI:30616"/>
    </ligand>
</feature>
<sequence>MAETVELPSRLAILPFRNKVLLPGAIIRIRCTSHSSVTLVEQELWQKEEKGLIGILPVRDDAEGSSIGTMINPGAGSDSGERSLKFLVGTTDAQKSDAKDQQDLQWHTRGVAARALHLSRGVEKPSGRVTYVVVLEGLSRFNVQELGKRGPYSVARITSLEMTKAELEQVKQDPDFVALSRQFKTTAMELVSVLEQKQKTGGRTKVLLETVPIHKLADIFVASFEMSFEEQLSMLDSVDLKVRLSKATELVDRHLQSIRVAEKITQKVEGQLSKSQKEYLLRQQMRAIKEELGDNDDDEDDVAALERKMQAAGMPSNIWKHAQRELRRLKKMQPQQPGYNSSRVYLELLADLPWDKASEEHELDLKAAKERLDSDHYGLAKVKQRIIEYLAVRKLKPDARGPVLCFVGPPGVGKTSLASSIAAALGRKFVRLSLGGVKDEADIRGHRRTYIGSMPGRLIDGLKRVGVCNPVMLLDEIDKTGSDVRGDPASALLEVLDPEQNKSFNDHYLNVPYDLSKVVFVATANRVQPIPPPLLDRMELIELPGYTQEEKLKIAMRHLIPRVLDQHGLSSEFLKIPEAMVKNIIQRYTREAGVRSLERNLAALARAAAVMVAEHEQSLPLSKDVQKLTSPLLNGRMAEGGEVEMEVIPMGVNDHEIGGTFQSPSALVVDETMLEKILGPPRFDDSEAADRVASAGVSVGLVWTTFGGEVQFVEATSMVGKGEMHLTGQLGDVIKESAQLALTWVRARASDFKLALAGDMNVLDGRDIHIHFPAGAVPKDGPSAGVTLVTALVSLFSQKRVRADTAMTGEMTLRGLVLPVGGIKDKILAAHRYGIKRVILPQRNSKDLVEVPAAVLSSLEVILAKRMEDVLENAFEGGCPWRNNYSKL</sequence>
<comment type="function">
    <text evidence="1 5">ATP-dependent serine protease that mediates the selective degradation of misfolded and unassembled polypeptides in the peroxisomal matrix (By similarity). Necessary for type 2 peroxisome targeting signal (PTS2)-containing protein processing and facilitates peroxisome matrix protein import.</text>
</comment>
<comment type="catalytic activity">
    <reaction evidence="1">
        <text>Hydrolysis of proteins in presence of ATP.</text>
        <dbReference type="EC" id="3.4.21.53"/>
    </reaction>
</comment>
<comment type="subcellular location">
    <subcellularLocation>
        <location evidence="1 4">Peroxisome matrix</location>
    </subcellularLocation>
</comment>
<comment type="similarity">
    <text evidence="1">Belongs to the peptidase S16 family.</text>
</comment>
<comment type="sequence caution" evidence="6">
    <conflict type="erroneous initiation">
        <sequence resource="EMBL-CDS" id="AAO00734"/>
    </conflict>
</comment>
<evidence type="ECO:0000255" key="1">
    <source>
        <dbReference type="HAMAP-Rule" id="MF_03121"/>
    </source>
</evidence>
<evidence type="ECO:0000255" key="2">
    <source>
        <dbReference type="PROSITE-ProRule" id="PRU01122"/>
    </source>
</evidence>
<evidence type="ECO:0000255" key="3">
    <source>
        <dbReference type="PROSITE-ProRule" id="PRU01123"/>
    </source>
</evidence>
<evidence type="ECO:0000269" key="4">
    <source>
    </source>
</evidence>
<evidence type="ECO:0000269" key="5">
    <source>
    </source>
</evidence>
<evidence type="ECO:0000305" key="6"/>
<accession>O64948</accession>
<accession>Q8GT60</accession>
<protein>
    <recommendedName>
        <fullName evidence="1">Lon protease homolog 2, peroxisomal</fullName>
        <ecNumber evidence="1">3.4.21.53</ecNumber>
    </recommendedName>
</protein>
<reference key="1">
    <citation type="online journal article" date="1998" name="Plant Gene Register">
        <title>Isolation and sequence analysis of a genomic clone of Arabidopsis thaliana encoding a LON protein.</title>
        <authorList>
            <person name="Murray C."/>
            <person name="Christeller J.T."/>
            <person name="Gatehouse L.N."/>
            <person name="Laing W.A."/>
        </authorList>
        <locator>PGR98-023</locator>
    </citation>
    <scope>NUCLEOTIDE SEQUENCE [GENOMIC DNA]</scope>
    <source>
        <strain>cv. Landsberg erecta</strain>
    </source>
</reference>
<reference key="2">
    <citation type="journal article" date="1998" name="DNA Res.">
        <title>Structural analysis of Arabidopsis thaliana chromosome 5. VI. Sequence features of the regions of 1,367,185 bp covered by 19 physically assigned P1 and TAC clones.</title>
        <authorList>
            <person name="Kotani H."/>
            <person name="Nakamura Y."/>
            <person name="Sato S."/>
            <person name="Asamizu E."/>
            <person name="Kaneko T."/>
            <person name="Miyajima N."/>
            <person name="Tabata S."/>
        </authorList>
    </citation>
    <scope>NUCLEOTIDE SEQUENCE [LARGE SCALE GENOMIC DNA]</scope>
    <source>
        <strain>cv. Columbia</strain>
    </source>
</reference>
<reference key="3">
    <citation type="journal article" date="2017" name="Plant J.">
        <title>Araport11: a complete reannotation of the Arabidopsis thaliana reference genome.</title>
        <authorList>
            <person name="Cheng C.Y."/>
            <person name="Krishnakumar V."/>
            <person name="Chan A.P."/>
            <person name="Thibaud-Nissen F."/>
            <person name="Schobel S."/>
            <person name="Town C.D."/>
        </authorList>
    </citation>
    <scope>GENOME REANNOTATION</scope>
    <source>
        <strain>cv. Columbia</strain>
    </source>
</reference>
<reference key="4">
    <citation type="journal article" date="2003" name="Science">
        <title>Empirical analysis of transcriptional activity in the Arabidopsis genome.</title>
        <authorList>
            <person name="Yamada K."/>
            <person name="Lim J."/>
            <person name="Dale J.M."/>
            <person name="Chen H."/>
            <person name="Shinn P."/>
            <person name="Palm C.J."/>
            <person name="Southwick A.M."/>
            <person name="Wu H.C."/>
            <person name="Kim C.J."/>
            <person name="Nguyen M."/>
            <person name="Pham P.K."/>
            <person name="Cheuk R.F."/>
            <person name="Karlin-Newmann G."/>
            <person name="Liu S.X."/>
            <person name="Lam B."/>
            <person name="Sakano H."/>
            <person name="Wu T."/>
            <person name="Yu G."/>
            <person name="Miranda M."/>
            <person name="Quach H.L."/>
            <person name="Tripp M."/>
            <person name="Chang C.H."/>
            <person name="Lee J.M."/>
            <person name="Toriumi M.J."/>
            <person name="Chan M.M."/>
            <person name="Tang C.C."/>
            <person name="Onodera C.S."/>
            <person name="Deng J.M."/>
            <person name="Akiyama K."/>
            <person name="Ansari Y."/>
            <person name="Arakawa T."/>
            <person name="Banh J."/>
            <person name="Banno F."/>
            <person name="Bowser L."/>
            <person name="Brooks S.Y."/>
            <person name="Carninci P."/>
            <person name="Chao Q."/>
            <person name="Choy N."/>
            <person name="Enju A."/>
            <person name="Goldsmith A.D."/>
            <person name="Gurjal M."/>
            <person name="Hansen N.F."/>
            <person name="Hayashizaki Y."/>
            <person name="Johnson-Hopson C."/>
            <person name="Hsuan V.W."/>
            <person name="Iida K."/>
            <person name="Karnes M."/>
            <person name="Khan S."/>
            <person name="Koesema E."/>
            <person name="Ishida J."/>
            <person name="Jiang P.X."/>
            <person name="Jones T."/>
            <person name="Kawai J."/>
            <person name="Kamiya A."/>
            <person name="Meyers C."/>
            <person name="Nakajima M."/>
            <person name="Narusaka M."/>
            <person name="Seki M."/>
            <person name="Sakurai T."/>
            <person name="Satou M."/>
            <person name="Tamse R."/>
            <person name="Vaysberg M."/>
            <person name="Wallender E.K."/>
            <person name="Wong C."/>
            <person name="Yamamura Y."/>
            <person name="Yuan S."/>
            <person name="Shinozaki K."/>
            <person name="Davis R.W."/>
            <person name="Theologis A."/>
            <person name="Ecker J.R."/>
        </authorList>
    </citation>
    <scope>NUCLEOTIDE SEQUENCE [LARGE SCALE MRNA] OF 317-888</scope>
    <source>
        <strain>cv. Columbia</strain>
    </source>
</reference>
<reference key="5">
    <citation type="journal article" date="2009" name="Plant Physiol.">
        <title>In-depth proteome analysis of Arabidopsis leaf peroxisomes combined with in vivo subcellular targeting verification indicates novel metabolic and regulatory functions of peroxisomes.</title>
        <authorList>
            <person name="Reumann S."/>
            <person name="Quan S."/>
            <person name="Aung K."/>
            <person name="Yang P."/>
            <person name="Manandhar-Shrestha K."/>
            <person name="Holbrook D."/>
            <person name="Linka N."/>
            <person name="Switzenberg R."/>
            <person name="Wilkerson C.G."/>
            <person name="Weber A.P."/>
            <person name="Olsen L.J."/>
            <person name="Hu J."/>
        </authorList>
    </citation>
    <scope>SUBCELLULAR LOCATION</scope>
</reference>
<reference key="6">
    <citation type="journal article" date="2009" name="Plant Physiol.">
        <title>Arabidopsis LON2 is necessary for peroxisomal function and sustained matrix protein import.</title>
        <authorList>
            <person name="Lingard M.J."/>
            <person name="Bartel B."/>
        </authorList>
    </citation>
    <scope>FUNCTION</scope>
</reference>